<feature type="chain" id="PRO_1000052309" description="Large ribosomal subunit protein uL24">
    <location>
        <begin position="1"/>
        <end position="104"/>
    </location>
</feature>
<reference key="1">
    <citation type="submission" date="2006-09" db="EMBL/GenBank/DDBJ databases">
        <title>Complete sequence of chromosome 1 of Shewanella sp. ANA-3.</title>
        <authorList>
            <person name="Copeland A."/>
            <person name="Lucas S."/>
            <person name="Lapidus A."/>
            <person name="Barry K."/>
            <person name="Detter J.C."/>
            <person name="Glavina del Rio T."/>
            <person name="Hammon N."/>
            <person name="Israni S."/>
            <person name="Dalin E."/>
            <person name="Tice H."/>
            <person name="Pitluck S."/>
            <person name="Chertkov O."/>
            <person name="Brettin T."/>
            <person name="Bruce D."/>
            <person name="Han C."/>
            <person name="Tapia R."/>
            <person name="Gilna P."/>
            <person name="Schmutz J."/>
            <person name="Larimer F."/>
            <person name="Land M."/>
            <person name="Hauser L."/>
            <person name="Kyrpides N."/>
            <person name="Kim E."/>
            <person name="Newman D."/>
            <person name="Salticov C."/>
            <person name="Konstantinidis K."/>
            <person name="Klappenback J."/>
            <person name="Tiedje J."/>
            <person name="Richardson P."/>
        </authorList>
    </citation>
    <scope>NUCLEOTIDE SEQUENCE [LARGE SCALE GENOMIC DNA]</scope>
    <source>
        <strain>ANA-3</strain>
    </source>
</reference>
<accession>A0KRN5</accession>
<sequence>MAAKIRRQDEVIVLAGKDKGKRAKVAQVLPTGKLIVEGINLVKKHQKPNPQLGVAGGIVEKEAPIQASNVAIFNPVTGKADRVGFRFEDGKKVRFFKSNSELVK</sequence>
<name>RL24_SHESA</name>
<keyword id="KW-0687">Ribonucleoprotein</keyword>
<keyword id="KW-0689">Ribosomal protein</keyword>
<keyword id="KW-0694">RNA-binding</keyword>
<keyword id="KW-0699">rRNA-binding</keyword>
<organism>
    <name type="scientific">Shewanella sp. (strain ANA-3)</name>
    <dbReference type="NCBI Taxonomy" id="94122"/>
    <lineage>
        <taxon>Bacteria</taxon>
        <taxon>Pseudomonadati</taxon>
        <taxon>Pseudomonadota</taxon>
        <taxon>Gammaproteobacteria</taxon>
        <taxon>Alteromonadales</taxon>
        <taxon>Shewanellaceae</taxon>
        <taxon>Shewanella</taxon>
    </lineage>
</organism>
<protein>
    <recommendedName>
        <fullName evidence="1">Large ribosomal subunit protein uL24</fullName>
    </recommendedName>
    <alternativeName>
        <fullName evidence="2">50S ribosomal protein L24</fullName>
    </alternativeName>
</protein>
<proteinExistence type="inferred from homology"/>
<evidence type="ECO:0000255" key="1">
    <source>
        <dbReference type="HAMAP-Rule" id="MF_01326"/>
    </source>
</evidence>
<evidence type="ECO:0000305" key="2"/>
<gene>
    <name evidence="1" type="primary">rplX</name>
    <name type="ordered locus">Shewana3_0210</name>
</gene>
<comment type="function">
    <text evidence="1">One of two assembly initiator proteins, it binds directly to the 5'-end of the 23S rRNA, where it nucleates assembly of the 50S subunit.</text>
</comment>
<comment type="function">
    <text evidence="1">One of the proteins that surrounds the polypeptide exit tunnel on the outside of the subunit.</text>
</comment>
<comment type="subunit">
    <text evidence="1">Part of the 50S ribosomal subunit.</text>
</comment>
<comment type="similarity">
    <text evidence="1">Belongs to the universal ribosomal protein uL24 family.</text>
</comment>
<dbReference type="EMBL" id="CP000469">
    <property type="protein sequence ID" value="ABK46454.1"/>
    <property type="molecule type" value="Genomic_DNA"/>
</dbReference>
<dbReference type="RefSeq" id="WP_011070623.1">
    <property type="nucleotide sequence ID" value="NC_008577.1"/>
</dbReference>
<dbReference type="SMR" id="A0KRN5"/>
<dbReference type="STRING" id="94122.Shewana3_0210"/>
<dbReference type="GeneID" id="94726197"/>
<dbReference type="KEGG" id="shn:Shewana3_0210"/>
<dbReference type="eggNOG" id="COG0198">
    <property type="taxonomic scope" value="Bacteria"/>
</dbReference>
<dbReference type="HOGENOM" id="CLU_093315_2_2_6"/>
<dbReference type="OrthoDB" id="9807419at2"/>
<dbReference type="Proteomes" id="UP000002589">
    <property type="component" value="Chromosome"/>
</dbReference>
<dbReference type="GO" id="GO:1990904">
    <property type="term" value="C:ribonucleoprotein complex"/>
    <property type="evidence" value="ECO:0007669"/>
    <property type="project" value="UniProtKB-KW"/>
</dbReference>
<dbReference type="GO" id="GO:0005840">
    <property type="term" value="C:ribosome"/>
    <property type="evidence" value="ECO:0007669"/>
    <property type="project" value="UniProtKB-KW"/>
</dbReference>
<dbReference type="GO" id="GO:0019843">
    <property type="term" value="F:rRNA binding"/>
    <property type="evidence" value="ECO:0007669"/>
    <property type="project" value="UniProtKB-UniRule"/>
</dbReference>
<dbReference type="GO" id="GO:0003735">
    <property type="term" value="F:structural constituent of ribosome"/>
    <property type="evidence" value="ECO:0007669"/>
    <property type="project" value="InterPro"/>
</dbReference>
<dbReference type="GO" id="GO:0006412">
    <property type="term" value="P:translation"/>
    <property type="evidence" value="ECO:0007669"/>
    <property type="project" value="UniProtKB-UniRule"/>
</dbReference>
<dbReference type="CDD" id="cd06089">
    <property type="entry name" value="KOW_RPL26"/>
    <property type="match status" value="1"/>
</dbReference>
<dbReference type="FunFam" id="2.30.30.30:FF:000004">
    <property type="entry name" value="50S ribosomal protein L24"/>
    <property type="match status" value="1"/>
</dbReference>
<dbReference type="Gene3D" id="2.30.30.30">
    <property type="match status" value="1"/>
</dbReference>
<dbReference type="HAMAP" id="MF_01326_B">
    <property type="entry name" value="Ribosomal_uL24_B"/>
    <property type="match status" value="1"/>
</dbReference>
<dbReference type="InterPro" id="IPR005824">
    <property type="entry name" value="KOW"/>
</dbReference>
<dbReference type="InterPro" id="IPR014722">
    <property type="entry name" value="Rib_uL2_dom2"/>
</dbReference>
<dbReference type="InterPro" id="IPR003256">
    <property type="entry name" value="Ribosomal_uL24"/>
</dbReference>
<dbReference type="InterPro" id="IPR041988">
    <property type="entry name" value="Ribosomal_uL24_KOW"/>
</dbReference>
<dbReference type="InterPro" id="IPR008991">
    <property type="entry name" value="Translation_prot_SH3-like_sf"/>
</dbReference>
<dbReference type="NCBIfam" id="TIGR01079">
    <property type="entry name" value="rplX_bact"/>
    <property type="match status" value="1"/>
</dbReference>
<dbReference type="PANTHER" id="PTHR12903">
    <property type="entry name" value="MITOCHONDRIAL RIBOSOMAL PROTEIN L24"/>
    <property type="match status" value="1"/>
</dbReference>
<dbReference type="Pfam" id="PF00467">
    <property type="entry name" value="KOW"/>
    <property type="match status" value="1"/>
</dbReference>
<dbReference type="Pfam" id="PF17136">
    <property type="entry name" value="ribosomal_L24"/>
    <property type="match status" value="1"/>
</dbReference>
<dbReference type="SMART" id="SM00739">
    <property type="entry name" value="KOW"/>
    <property type="match status" value="1"/>
</dbReference>
<dbReference type="SUPFAM" id="SSF50104">
    <property type="entry name" value="Translation proteins SH3-like domain"/>
    <property type="match status" value="1"/>
</dbReference>